<reference key="1">
    <citation type="journal article" date="2008" name="DNA Res.">
        <title>The whole-genome sequencing of the obligate intracellular bacterium Orientia tsutsugamushi revealed massive gene amplification during reductive genome evolution.</title>
        <authorList>
            <person name="Nakayama K."/>
            <person name="Yamashita A."/>
            <person name="Kurokawa K."/>
            <person name="Morimoto T."/>
            <person name="Ogawa M."/>
            <person name="Fukuhara M."/>
            <person name="Urakami H."/>
            <person name="Ohnishi M."/>
            <person name="Uchiyama I."/>
            <person name="Ogura Y."/>
            <person name="Ooka T."/>
            <person name="Oshima K."/>
            <person name="Tamura A."/>
            <person name="Hattori M."/>
            <person name="Hayashi T."/>
        </authorList>
    </citation>
    <scope>NUCLEOTIDE SEQUENCE [LARGE SCALE GENOMIC DNA]</scope>
    <source>
        <strain>Ikeda</strain>
    </source>
</reference>
<keyword id="KW-0066">ATP synthesis</keyword>
<keyword id="KW-0067">ATP-binding</keyword>
<keyword id="KW-0997">Cell inner membrane</keyword>
<keyword id="KW-1003">Cell membrane</keyword>
<keyword id="KW-0139">CF(1)</keyword>
<keyword id="KW-0375">Hydrogen ion transport</keyword>
<keyword id="KW-0406">Ion transport</keyword>
<keyword id="KW-0472">Membrane</keyword>
<keyword id="KW-0547">Nucleotide-binding</keyword>
<keyword id="KW-1278">Translocase</keyword>
<keyword id="KW-0813">Transport</keyword>
<sequence>MKLKAKYKQQSKVGKVVQVVSAVVDVSFAGKDLPHILNALECTINNEKIVLEVVQHIGDDIVRCLAMNSTDGLFRGAEVIDTGEQIKVPVGKSILGRILNVVGQPIDDLGPIKCDNFSQIHKDAPKFINQSTSRKILITGIKVIDLLTPYISGGKIGLFGGAGVGKTVLIMEIINNVAKAYKGYTVFTGVGERTREGGDLYKEMVGSNIIDLNKLENSKVTLVFGQMNEPPGARARVALTGLTIAESFRDMNEGEVLLFIDNIFRFTQAGAEISTLLGRIPSAVGYQPTLATDIGSLQERITSTKFGAITSIQAIYVPADDLTDPAPVACFAHLDATTVLSRKIAELGIYPAVDPLNSSSQILDANVIGQEHYSVATKVQEILQTYKSLQDVIAILGVDELSDDEKRIVSRARKIQRFLTQPFHVAEVFTGKQGRFVSLEDTIYGFKGLIEGKYDDLPEMAFYMVGSIDEAIEKSKTL</sequence>
<organism>
    <name type="scientific">Orientia tsutsugamushi (strain Ikeda)</name>
    <name type="common">Rickettsia tsutsugamushi</name>
    <dbReference type="NCBI Taxonomy" id="334380"/>
    <lineage>
        <taxon>Bacteria</taxon>
        <taxon>Pseudomonadati</taxon>
        <taxon>Pseudomonadota</taxon>
        <taxon>Alphaproteobacteria</taxon>
        <taxon>Rickettsiales</taxon>
        <taxon>Rickettsiaceae</taxon>
        <taxon>Rickettsieae</taxon>
        <taxon>Orientia</taxon>
    </lineage>
</organism>
<proteinExistence type="inferred from homology"/>
<dbReference type="EC" id="7.1.2.2" evidence="1"/>
<dbReference type="EMBL" id="AP008981">
    <property type="protein sequence ID" value="BAG40047.1"/>
    <property type="molecule type" value="Genomic_DNA"/>
</dbReference>
<dbReference type="RefSeq" id="WP_012461239.1">
    <property type="nucleotide sequence ID" value="NC_010793.1"/>
</dbReference>
<dbReference type="SMR" id="B3CRK6"/>
<dbReference type="KEGG" id="ott:OTT_0589"/>
<dbReference type="HOGENOM" id="CLU_022398_0_2_5"/>
<dbReference type="OrthoDB" id="9801639at2"/>
<dbReference type="Proteomes" id="UP000001033">
    <property type="component" value="Chromosome"/>
</dbReference>
<dbReference type="GO" id="GO:0005886">
    <property type="term" value="C:plasma membrane"/>
    <property type="evidence" value="ECO:0007669"/>
    <property type="project" value="UniProtKB-SubCell"/>
</dbReference>
<dbReference type="GO" id="GO:0045259">
    <property type="term" value="C:proton-transporting ATP synthase complex"/>
    <property type="evidence" value="ECO:0007669"/>
    <property type="project" value="UniProtKB-KW"/>
</dbReference>
<dbReference type="GO" id="GO:0005524">
    <property type="term" value="F:ATP binding"/>
    <property type="evidence" value="ECO:0007669"/>
    <property type="project" value="UniProtKB-UniRule"/>
</dbReference>
<dbReference type="GO" id="GO:0016887">
    <property type="term" value="F:ATP hydrolysis activity"/>
    <property type="evidence" value="ECO:0007669"/>
    <property type="project" value="InterPro"/>
</dbReference>
<dbReference type="GO" id="GO:0046933">
    <property type="term" value="F:proton-transporting ATP synthase activity, rotational mechanism"/>
    <property type="evidence" value="ECO:0007669"/>
    <property type="project" value="UniProtKB-UniRule"/>
</dbReference>
<dbReference type="CDD" id="cd18110">
    <property type="entry name" value="ATP-synt_F1_beta_C"/>
    <property type="match status" value="1"/>
</dbReference>
<dbReference type="CDD" id="cd18115">
    <property type="entry name" value="ATP-synt_F1_beta_N"/>
    <property type="match status" value="1"/>
</dbReference>
<dbReference type="CDD" id="cd01133">
    <property type="entry name" value="F1-ATPase_beta_CD"/>
    <property type="match status" value="1"/>
</dbReference>
<dbReference type="FunFam" id="1.10.1140.10:FF:000001">
    <property type="entry name" value="ATP synthase subunit beta"/>
    <property type="match status" value="1"/>
</dbReference>
<dbReference type="FunFam" id="3.40.50.300:FF:000026">
    <property type="entry name" value="ATP synthase subunit beta"/>
    <property type="match status" value="1"/>
</dbReference>
<dbReference type="Gene3D" id="2.40.10.170">
    <property type="match status" value="1"/>
</dbReference>
<dbReference type="Gene3D" id="1.10.1140.10">
    <property type="entry name" value="Bovine Mitochondrial F1-atpase, Atp Synthase Beta Chain, Chain D, domain 3"/>
    <property type="match status" value="1"/>
</dbReference>
<dbReference type="Gene3D" id="3.40.50.300">
    <property type="entry name" value="P-loop containing nucleotide triphosphate hydrolases"/>
    <property type="match status" value="1"/>
</dbReference>
<dbReference type="HAMAP" id="MF_01347">
    <property type="entry name" value="ATP_synth_beta_bact"/>
    <property type="match status" value="1"/>
</dbReference>
<dbReference type="InterPro" id="IPR003593">
    <property type="entry name" value="AAA+_ATPase"/>
</dbReference>
<dbReference type="InterPro" id="IPR055190">
    <property type="entry name" value="ATP-synt_VA_C"/>
</dbReference>
<dbReference type="InterPro" id="IPR005722">
    <property type="entry name" value="ATP_synth_F1_bsu"/>
</dbReference>
<dbReference type="InterPro" id="IPR020003">
    <property type="entry name" value="ATPase_a/bsu_AS"/>
</dbReference>
<dbReference type="InterPro" id="IPR050053">
    <property type="entry name" value="ATPase_alpha/beta_chains"/>
</dbReference>
<dbReference type="InterPro" id="IPR004100">
    <property type="entry name" value="ATPase_F1/V1/A1_a/bsu_N"/>
</dbReference>
<dbReference type="InterPro" id="IPR036121">
    <property type="entry name" value="ATPase_F1/V1/A1_a/bsu_N_sf"/>
</dbReference>
<dbReference type="InterPro" id="IPR000194">
    <property type="entry name" value="ATPase_F1/V1/A1_a/bsu_nucl-bd"/>
</dbReference>
<dbReference type="InterPro" id="IPR024034">
    <property type="entry name" value="ATPase_F1/V1_b/a_C"/>
</dbReference>
<dbReference type="InterPro" id="IPR027417">
    <property type="entry name" value="P-loop_NTPase"/>
</dbReference>
<dbReference type="NCBIfam" id="TIGR01039">
    <property type="entry name" value="atpD"/>
    <property type="match status" value="1"/>
</dbReference>
<dbReference type="PANTHER" id="PTHR15184">
    <property type="entry name" value="ATP SYNTHASE"/>
    <property type="match status" value="1"/>
</dbReference>
<dbReference type="PANTHER" id="PTHR15184:SF71">
    <property type="entry name" value="ATP SYNTHASE SUBUNIT BETA, MITOCHONDRIAL"/>
    <property type="match status" value="1"/>
</dbReference>
<dbReference type="Pfam" id="PF00006">
    <property type="entry name" value="ATP-synt_ab"/>
    <property type="match status" value="1"/>
</dbReference>
<dbReference type="Pfam" id="PF02874">
    <property type="entry name" value="ATP-synt_ab_N"/>
    <property type="match status" value="1"/>
</dbReference>
<dbReference type="Pfam" id="PF22919">
    <property type="entry name" value="ATP-synt_VA_C"/>
    <property type="match status" value="1"/>
</dbReference>
<dbReference type="SMART" id="SM00382">
    <property type="entry name" value="AAA"/>
    <property type="match status" value="1"/>
</dbReference>
<dbReference type="SUPFAM" id="SSF47917">
    <property type="entry name" value="C-terminal domain of alpha and beta subunits of F1 ATP synthase"/>
    <property type="match status" value="1"/>
</dbReference>
<dbReference type="SUPFAM" id="SSF50615">
    <property type="entry name" value="N-terminal domain of alpha and beta subunits of F1 ATP synthase"/>
    <property type="match status" value="1"/>
</dbReference>
<dbReference type="SUPFAM" id="SSF52540">
    <property type="entry name" value="P-loop containing nucleoside triphosphate hydrolases"/>
    <property type="match status" value="1"/>
</dbReference>
<dbReference type="PROSITE" id="PS00152">
    <property type="entry name" value="ATPASE_ALPHA_BETA"/>
    <property type="match status" value="1"/>
</dbReference>
<name>ATPB_ORITI</name>
<protein>
    <recommendedName>
        <fullName evidence="1">ATP synthase subunit beta</fullName>
        <ecNumber evidence="1">7.1.2.2</ecNumber>
    </recommendedName>
    <alternativeName>
        <fullName evidence="1">ATP synthase F1 sector subunit beta</fullName>
    </alternativeName>
    <alternativeName>
        <fullName evidence="1">F-ATPase subunit beta</fullName>
    </alternativeName>
</protein>
<gene>
    <name evidence="1" type="primary">atpD</name>
    <name type="ordered locus">OTT_0589</name>
</gene>
<accession>B3CRK6</accession>
<feature type="chain" id="PRO_1000143528" description="ATP synthase subunit beta">
    <location>
        <begin position="1"/>
        <end position="478"/>
    </location>
</feature>
<feature type="binding site" evidence="1">
    <location>
        <begin position="160"/>
        <end position="167"/>
    </location>
    <ligand>
        <name>ATP</name>
        <dbReference type="ChEBI" id="CHEBI:30616"/>
    </ligand>
</feature>
<evidence type="ECO:0000255" key="1">
    <source>
        <dbReference type="HAMAP-Rule" id="MF_01347"/>
    </source>
</evidence>
<comment type="function">
    <text evidence="1">Produces ATP from ADP in the presence of a proton gradient across the membrane. The catalytic sites are hosted primarily by the beta subunits.</text>
</comment>
<comment type="catalytic activity">
    <reaction evidence="1">
        <text>ATP + H2O + 4 H(+)(in) = ADP + phosphate + 5 H(+)(out)</text>
        <dbReference type="Rhea" id="RHEA:57720"/>
        <dbReference type="ChEBI" id="CHEBI:15377"/>
        <dbReference type="ChEBI" id="CHEBI:15378"/>
        <dbReference type="ChEBI" id="CHEBI:30616"/>
        <dbReference type="ChEBI" id="CHEBI:43474"/>
        <dbReference type="ChEBI" id="CHEBI:456216"/>
        <dbReference type="EC" id="7.1.2.2"/>
    </reaction>
</comment>
<comment type="subunit">
    <text evidence="1">F-type ATPases have 2 components, CF(1) - the catalytic core - and CF(0) - the membrane proton channel. CF(1) has five subunits: alpha(3), beta(3), gamma(1), delta(1), epsilon(1). CF(0) has three main subunits: a(1), b(2) and c(9-12). The alpha and beta chains form an alternating ring which encloses part of the gamma chain. CF(1) is attached to CF(0) by a central stalk formed by the gamma and epsilon chains, while a peripheral stalk is formed by the delta and b chains.</text>
</comment>
<comment type="subcellular location">
    <subcellularLocation>
        <location evidence="1">Cell inner membrane</location>
        <topology evidence="1">Peripheral membrane protein</topology>
    </subcellularLocation>
</comment>
<comment type="similarity">
    <text evidence="1">Belongs to the ATPase alpha/beta chains family.</text>
</comment>